<protein>
    <recommendedName>
        <fullName evidence="1">N5-carboxyaminoimidazole ribonucleotide mutase</fullName>
        <shortName evidence="1">N5-CAIR mutase</shortName>
        <ecNumber evidence="1">5.4.99.18</ecNumber>
    </recommendedName>
    <alternativeName>
        <fullName evidence="1">5-(carboxyamino)imidazole ribonucleotide mutase</fullName>
    </alternativeName>
</protein>
<proteinExistence type="inferred from homology"/>
<comment type="function">
    <text evidence="1">Catalyzes the conversion of N5-carboxyaminoimidazole ribonucleotide (N5-CAIR) to 4-carboxy-5-aminoimidazole ribonucleotide (CAIR).</text>
</comment>
<comment type="catalytic activity">
    <reaction evidence="1">
        <text>5-carboxyamino-1-(5-phospho-D-ribosyl)imidazole + H(+) = 5-amino-1-(5-phospho-D-ribosyl)imidazole-4-carboxylate</text>
        <dbReference type="Rhea" id="RHEA:13193"/>
        <dbReference type="ChEBI" id="CHEBI:15378"/>
        <dbReference type="ChEBI" id="CHEBI:58730"/>
        <dbReference type="ChEBI" id="CHEBI:77657"/>
        <dbReference type="EC" id="5.4.99.18"/>
    </reaction>
</comment>
<comment type="pathway">
    <text evidence="1">Purine metabolism; IMP biosynthesis via de novo pathway; 5-amino-1-(5-phospho-D-ribosyl)imidazole-4-carboxylate from 5-amino-1-(5-phospho-D-ribosyl)imidazole (N5-CAIR route): step 2/2.</text>
</comment>
<comment type="similarity">
    <text evidence="1">Belongs to the AIR carboxylase family. Class I subfamily.</text>
</comment>
<gene>
    <name evidence="1" type="primary">purE</name>
    <name type="ordered locus">VC_0052</name>
</gene>
<organism>
    <name type="scientific">Vibrio cholerae serotype O1 (strain ATCC 39315 / El Tor Inaba N16961)</name>
    <dbReference type="NCBI Taxonomy" id="243277"/>
    <lineage>
        <taxon>Bacteria</taxon>
        <taxon>Pseudomonadati</taxon>
        <taxon>Pseudomonadota</taxon>
        <taxon>Gammaproteobacteria</taxon>
        <taxon>Vibrionales</taxon>
        <taxon>Vibrionaceae</taxon>
        <taxon>Vibrio</taxon>
    </lineage>
</organism>
<reference key="1">
    <citation type="submission" date="2001-12" db="EMBL/GenBank/DDBJ databases">
        <title>Identification of two Vibrio cholerae El Tor genes induced in the estuarine environment.</title>
        <authorList>
            <person name="Soares C.A.G."/>
            <person name="DiRita V.J."/>
            <person name="Santos E.O."/>
            <person name="Coelho A."/>
        </authorList>
    </citation>
    <scope>NUCLEOTIDE SEQUENCE [GENOMIC DNA]</scope>
    <source>
        <strain>El Tor C3294</strain>
    </source>
</reference>
<reference key="2">
    <citation type="journal article" date="2000" name="Nature">
        <title>DNA sequence of both chromosomes of the cholera pathogen Vibrio cholerae.</title>
        <authorList>
            <person name="Heidelberg J.F."/>
            <person name="Eisen J.A."/>
            <person name="Nelson W.C."/>
            <person name="Clayton R.A."/>
            <person name="Gwinn M.L."/>
            <person name="Dodson R.J."/>
            <person name="Haft D.H."/>
            <person name="Hickey E.K."/>
            <person name="Peterson J.D."/>
            <person name="Umayam L.A."/>
            <person name="Gill S.R."/>
            <person name="Nelson K.E."/>
            <person name="Read T.D."/>
            <person name="Tettelin H."/>
            <person name="Richardson D.L."/>
            <person name="Ermolaeva M.D."/>
            <person name="Vamathevan J.J."/>
            <person name="Bass S."/>
            <person name="Qin H."/>
            <person name="Dragoi I."/>
            <person name="Sellers P."/>
            <person name="McDonald L.A."/>
            <person name="Utterback T.R."/>
            <person name="Fleischmann R.D."/>
            <person name="Nierman W.C."/>
            <person name="White O."/>
            <person name="Salzberg S.L."/>
            <person name="Smith H.O."/>
            <person name="Colwell R.R."/>
            <person name="Mekalanos J.J."/>
            <person name="Venter J.C."/>
            <person name="Fraser C.M."/>
        </authorList>
    </citation>
    <scope>NUCLEOTIDE SEQUENCE [LARGE SCALE GENOMIC DNA]</scope>
    <source>
        <strain>ATCC 39315 / El Tor Inaba N16961</strain>
    </source>
</reference>
<sequence length="161" mass="16645">MTVGIIMGSKSDWPTMKHAAEMLDQFGVAYETKVVSAHRTPHLLADYASSAKERGLQVIIAGAGGAAHLPGMTAAFTSLPVLGVPVQSRALSGLDSLYSIVQMPKGIAVGTLAIGEAGAANAGLLAAQIIGIHNPEVMSKVEAFRAKQTQSVLDNPNPAEE</sequence>
<keyword id="KW-0413">Isomerase</keyword>
<keyword id="KW-0658">Purine biosynthesis</keyword>
<keyword id="KW-1185">Reference proteome</keyword>
<accession>Q9KVT7</accession>
<accession>Q7B8Z7</accession>
<feature type="chain" id="PRO_0000074981" description="N5-carboxyaminoimidazole ribonucleotide mutase">
    <location>
        <begin position="1"/>
        <end position="161"/>
    </location>
</feature>
<feature type="binding site" evidence="1">
    <location>
        <position position="9"/>
    </location>
    <ligand>
        <name>substrate</name>
    </ligand>
</feature>
<feature type="binding site" evidence="1">
    <location>
        <position position="12"/>
    </location>
    <ligand>
        <name>substrate</name>
    </ligand>
</feature>
<feature type="binding site" evidence="1">
    <location>
        <position position="39"/>
    </location>
    <ligand>
        <name>substrate</name>
    </ligand>
</feature>
<name>PURE_VIBCH</name>
<evidence type="ECO:0000255" key="1">
    <source>
        <dbReference type="HAMAP-Rule" id="MF_01929"/>
    </source>
</evidence>
<dbReference type="EC" id="5.4.99.18" evidence="1"/>
<dbReference type="EMBL" id="AF459402">
    <property type="protein sequence ID" value="AAL66729.1"/>
    <property type="molecule type" value="Genomic_DNA"/>
</dbReference>
<dbReference type="EMBL" id="AE003852">
    <property type="protein sequence ID" value="AAF93230.1"/>
    <property type="molecule type" value="Genomic_DNA"/>
</dbReference>
<dbReference type="PIR" id="C82370">
    <property type="entry name" value="C82370"/>
</dbReference>
<dbReference type="RefSeq" id="NP_229711.1">
    <property type="nucleotide sequence ID" value="NC_002505.1"/>
</dbReference>
<dbReference type="RefSeq" id="WP_000215768.1">
    <property type="nucleotide sequence ID" value="NZ_LT906614.1"/>
</dbReference>
<dbReference type="SMR" id="Q9KVT7"/>
<dbReference type="STRING" id="243277.VC_0052"/>
<dbReference type="DNASU" id="2614427"/>
<dbReference type="EnsemblBacteria" id="AAF93230">
    <property type="protein sequence ID" value="AAF93230"/>
    <property type="gene ID" value="VC_0052"/>
</dbReference>
<dbReference type="KEGG" id="vch:VC_0052"/>
<dbReference type="PATRIC" id="fig|243277.26.peg.51"/>
<dbReference type="eggNOG" id="COG0041">
    <property type="taxonomic scope" value="Bacteria"/>
</dbReference>
<dbReference type="HOGENOM" id="CLU_094982_2_2_6"/>
<dbReference type="UniPathway" id="UPA00074">
    <property type="reaction ID" value="UER00943"/>
</dbReference>
<dbReference type="Proteomes" id="UP000000584">
    <property type="component" value="Chromosome 1"/>
</dbReference>
<dbReference type="GO" id="GO:0034023">
    <property type="term" value="F:5-(carboxyamino)imidazole ribonucleotide mutase activity"/>
    <property type="evidence" value="ECO:0007669"/>
    <property type="project" value="UniProtKB-UniRule"/>
</dbReference>
<dbReference type="GO" id="GO:0006189">
    <property type="term" value="P:'de novo' IMP biosynthetic process"/>
    <property type="evidence" value="ECO:0007669"/>
    <property type="project" value="UniProtKB-UniRule"/>
</dbReference>
<dbReference type="FunFam" id="3.40.50.1970:FF:000004">
    <property type="entry name" value="N5-carboxyaminoimidazole ribonucleotide mutase"/>
    <property type="match status" value="1"/>
</dbReference>
<dbReference type="Gene3D" id="3.40.50.1970">
    <property type="match status" value="1"/>
</dbReference>
<dbReference type="HAMAP" id="MF_01929">
    <property type="entry name" value="PurE_classI"/>
    <property type="match status" value="1"/>
</dbReference>
<dbReference type="InterPro" id="IPR033747">
    <property type="entry name" value="PurE_ClassI"/>
</dbReference>
<dbReference type="InterPro" id="IPR000031">
    <property type="entry name" value="PurE_dom"/>
</dbReference>
<dbReference type="InterPro" id="IPR024694">
    <property type="entry name" value="PurE_prokaryotes"/>
</dbReference>
<dbReference type="NCBIfam" id="TIGR01162">
    <property type="entry name" value="purE"/>
    <property type="match status" value="1"/>
</dbReference>
<dbReference type="PANTHER" id="PTHR23046:SF2">
    <property type="entry name" value="PHOSPHORIBOSYLAMINOIMIDAZOLE CARBOXYLASE"/>
    <property type="match status" value="1"/>
</dbReference>
<dbReference type="PANTHER" id="PTHR23046">
    <property type="entry name" value="PHOSPHORIBOSYLAMINOIMIDAZOLE CARBOXYLASE CATALYTIC SUBUNIT"/>
    <property type="match status" value="1"/>
</dbReference>
<dbReference type="Pfam" id="PF00731">
    <property type="entry name" value="AIRC"/>
    <property type="match status" value="1"/>
</dbReference>
<dbReference type="PIRSF" id="PIRSF001338">
    <property type="entry name" value="AIR_carboxylase"/>
    <property type="match status" value="1"/>
</dbReference>
<dbReference type="SMART" id="SM01001">
    <property type="entry name" value="AIRC"/>
    <property type="match status" value="1"/>
</dbReference>
<dbReference type="SUPFAM" id="SSF52255">
    <property type="entry name" value="N5-CAIR mutase (phosphoribosylaminoimidazole carboxylase, PurE)"/>
    <property type="match status" value="1"/>
</dbReference>